<feature type="chain" id="PRO_0000196470" description="DNA replication and repair protein RecF">
    <location>
        <begin position="1"/>
        <end position="373"/>
    </location>
</feature>
<feature type="binding site" evidence="2">
    <location>
        <begin position="30"/>
        <end position="37"/>
    </location>
    <ligand>
        <name>ATP</name>
        <dbReference type="ChEBI" id="CHEBI:30616"/>
    </ligand>
</feature>
<comment type="function">
    <text evidence="1">The RecF protein is involved in DNA metabolism; it is required for DNA replication and normal SOS inducibility. RecF binds preferentially to single-stranded, linear DNA. It also seems to bind ATP (By similarity).</text>
</comment>
<comment type="subcellular location">
    <subcellularLocation>
        <location evidence="1">Cytoplasm</location>
    </subcellularLocation>
</comment>
<comment type="similarity">
    <text evidence="3">Belongs to the RecF family.</text>
</comment>
<evidence type="ECO:0000250" key="1"/>
<evidence type="ECO:0000255" key="2"/>
<evidence type="ECO:0000305" key="3"/>
<sequence length="373" mass="40743">MHVTHLSLADFRSYARVEVPLDPGVTAFVGPNGQGKTNLVEAVGYLATLGSHRVSSDAPLVRMGAERAVIRAQVRQGERQQLIELELNPGRANRARVNRSSQVKPRDVLGIVRTVLFAPEDLALVKGDPGERRRFLDELITARSPRMAGVRSDYDRVLKQRNTLLKSAALARRHGGRTMDLSTLDVWDQHLARAGAELLAQRLDLIASVQPLADKAYEQLAPGGGPVALEYKPSAPGEAHTREDLYEQLMAALAEARKQEIERGVTLVGPHRDDLLLKLGSLPAKGYASHGESWSYALALRLASFDLLRAEGNEPVLVLDDVFAELDARRRERLAELVAPGEQVLVTAAVDDDVPHVLAGARFTVAEGTVERV</sequence>
<accession>P36176</accession>
<proteinExistence type="inferred from homology"/>
<dbReference type="EMBL" id="L27063">
    <property type="protein sequence ID" value="AAA65213.1"/>
    <property type="molecule type" value="Genomic_DNA"/>
</dbReference>
<dbReference type="EMBL" id="AL939118">
    <property type="protein sequence ID" value="CAB92996.1"/>
    <property type="molecule type" value="Genomic_DNA"/>
</dbReference>
<dbReference type="PIR" id="T10967">
    <property type="entry name" value="T10967"/>
</dbReference>
<dbReference type="RefSeq" id="NP_628063.1">
    <property type="nucleotide sequence ID" value="NC_003888.3"/>
</dbReference>
<dbReference type="RefSeq" id="WP_003975056.1">
    <property type="nucleotide sequence ID" value="NZ_VNID01000003.1"/>
</dbReference>
<dbReference type="SMR" id="P36176"/>
<dbReference type="FunCoup" id="P36176">
    <property type="interactions" value="16"/>
</dbReference>
<dbReference type="STRING" id="100226.gene:17761503"/>
<dbReference type="PaxDb" id="100226-SCO3876"/>
<dbReference type="GeneID" id="91385166"/>
<dbReference type="KEGG" id="sco:SCO3876"/>
<dbReference type="PATRIC" id="fig|100226.15.peg.3949"/>
<dbReference type="eggNOG" id="COG1195">
    <property type="taxonomic scope" value="Bacteria"/>
</dbReference>
<dbReference type="HOGENOM" id="CLU_040267_1_1_11"/>
<dbReference type="InParanoid" id="P36176"/>
<dbReference type="OrthoDB" id="9803889at2"/>
<dbReference type="PhylomeDB" id="P36176"/>
<dbReference type="Proteomes" id="UP000001973">
    <property type="component" value="Chromosome"/>
</dbReference>
<dbReference type="GO" id="GO:0005737">
    <property type="term" value="C:cytoplasm"/>
    <property type="evidence" value="ECO:0007669"/>
    <property type="project" value="UniProtKB-SubCell"/>
</dbReference>
<dbReference type="GO" id="GO:0005524">
    <property type="term" value="F:ATP binding"/>
    <property type="evidence" value="ECO:0007669"/>
    <property type="project" value="UniProtKB-UniRule"/>
</dbReference>
<dbReference type="GO" id="GO:0003697">
    <property type="term" value="F:single-stranded DNA binding"/>
    <property type="evidence" value="ECO:0007669"/>
    <property type="project" value="UniProtKB-UniRule"/>
</dbReference>
<dbReference type="GO" id="GO:0006260">
    <property type="term" value="P:DNA replication"/>
    <property type="evidence" value="ECO:0007669"/>
    <property type="project" value="UniProtKB-UniRule"/>
</dbReference>
<dbReference type="GO" id="GO:0000731">
    <property type="term" value="P:DNA synthesis involved in DNA repair"/>
    <property type="evidence" value="ECO:0000318"/>
    <property type="project" value="GO_Central"/>
</dbReference>
<dbReference type="GO" id="GO:0006302">
    <property type="term" value="P:double-strand break repair"/>
    <property type="evidence" value="ECO:0000318"/>
    <property type="project" value="GO_Central"/>
</dbReference>
<dbReference type="GO" id="GO:0009432">
    <property type="term" value="P:SOS response"/>
    <property type="evidence" value="ECO:0007669"/>
    <property type="project" value="UniProtKB-UniRule"/>
</dbReference>
<dbReference type="CDD" id="cd03242">
    <property type="entry name" value="ABC_RecF"/>
    <property type="match status" value="1"/>
</dbReference>
<dbReference type="FunFam" id="1.20.1050.90:FF:000004">
    <property type="entry name" value="DNA replication and repair protein RecF"/>
    <property type="match status" value="1"/>
</dbReference>
<dbReference type="FunFam" id="3.40.50.300:FF:000730">
    <property type="entry name" value="DNA replication and repair protein RecF"/>
    <property type="match status" value="1"/>
</dbReference>
<dbReference type="Gene3D" id="3.40.50.300">
    <property type="entry name" value="P-loop containing nucleotide triphosphate hydrolases"/>
    <property type="match status" value="1"/>
</dbReference>
<dbReference type="Gene3D" id="1.20.1050.90">
    <property type="entry name" value="RecF/RecN/SMC, N-terminal domain"/>
    <property type="match status" value="1"/>
</dbReference>
<dbReference type="HAMAP" id="MF_00365">
    <property type="entry name" value="RecF"/>
    <property type="match status" value="1"/>
</dbReference>
<dbReference type="InterPro" id="IPR001238">
    <property type="entry name" value="DNA-binding_RecF"/>
</dbReference>
<dbReference type="InterPro" id="IPR018078">
    <property type="entry name" value="DNA-binding_RecF_CS"/>
</dbReference>
<dbReference type="InterPro" id="IPR027417">
    <property type="entry name" value="P-loop_NTPase"/>
</dbReference>
<dbReference type="InterPro" id="IPR003395">
    <property type="entry name" value="RecF/RecN/SMC_N"/>
</dbReference>
<dbReference type="InterPro" id="IPR042174">
    <property type="entry name" value="RecF_2"/>
</dbReference>
<dbReference type="NCBIfam" id="TIGR00611">
    <property type="entry name" value="recf"/>
    <property type="match status" value="1"/>
</dbReference>
<dbReference type="PANTHER" id="PTHR32182">
    <property type="entry name" value="DNA REPLICATION AND REPAIR PROTEIN RECF"/>
    <property type="match status" value="1"/>
</dbReference>
<dbReference type="PANTHER" id="PTHR32182:SF0">
    <property type="entry name" value="DNA REPLICATION AND REPAIR PROTEIN RECF"/>
    <property type="match status" value="1"/>
</dbReference>
<dbReference type="Pfam" id="PF02463">
    <property type="entry name" value="SMC_N"/>
    <property type="match status" value="1"/>
</dbReference>
<dbReference type="SUPFAM" id="SSF52540">
    <property type="entry name" value="P-loop containing nucleoside triphosphate hydrolases"/>
    <property type="match status" value="1"/>
</dbReference>
<dbReference type="PROSITE" id="PS00617">
    <property type="entry name" value="RECF_1"/>
    <property type="match status" value="1"/>
</dbReference>
<dbReference type="PROSITE" id="PS00618">
    <property type="entry name" value="RECF_2"/>
    <property type="match status" value="1"/>
</dbReference>
<protein>
    <recommendedName>
        <fullName>DNA replication and repair protein RecF</fullName>
    </recommendedName>
</protein>
<organism>
    <name type="scientific">Streptomyces coelicolor (strain ATCC BAA-471 / A3(2) / M145)</name>
    <dbReference type="NCBI Taxonomy" id="100226"/>
    <lineage>
        <taxon>Bacteria</taxon>
        <taxon>Bacillati</taxon>
        <taxon>Actinomycetota</taxon>
        <taxon>Actinomycetes</taxon>
        <taxon>Kitasatosporales</taxon>
        <taxon>Streptomycetaceae</taxon>
        <taxon>Streptomyces</taxon>
        <taxon>Streptomyces albidoflavus group</taxon>
    </lineage>
</organism>
<reference key="1">
    <citation type="journal article" date="1994" name="Gene">
        <title>Gene organization in the dnaA-gyrA region of the Streptomyces coelicolor chromosome.</title>
        <authorList>
            <person name="Calcutt M.J."/>
        </authorList>
    </citation>
    <scope>NUCLEOTIDE SEQUENCE [GENOMIC DNA]</scope>
    <source>
        <strain>A3(2) / NRRL B-16638</strain>
    </source>
</reference>
<reference key="2">
    <citation type="journal article" date="2002" name="Nature">
        <title>Complete genome sequence of the model actinomycete Streptomyces coelicolor A3(2).</title>
        <authorList>
            <person name="Bentley S.D."/>
            <person name="Chater K.F."/>
            <person name="Cerdeno-Tarraga A.-M."/>
            <person name="Challis G.L."/>
            <person name="Thomson N.R."/>
            <person name="James K.D."/>
            <person name="Harris D.E."/>
            <person name="Quail M.A."/>
            <person name="Kieser H."/>
            <person name="Harper D."/>
            <person name="Bateman A."/>
            <person name="Brown S."/>
            <person name="Chandra G."/>
            <person name="Chen C.W."/>
            <person name="Collins M."/>
            <person name="Cronin A."/>
            <person name="Fraser A."/>
            <person name="Goble A."/>
            <person name="Hidalgo J."/>
            <person name="Hornsby T."/>
            <person name="Howarth S."/>
            <person name="Huang C.-H."/>
            <person name="Kieser T."/>
            <person name="Larke L."/>
            <person name="Murphy L.D."/>
            <person name="Oliver K."/>
            <person name="O'Neil S."/>
            <person name="Rabbinowitsch E."/>
            <person name="Rajandream M.A."/>
            <person name="Rutherford K.M."/>
            <person name="Rutter S."/>
            <person name="Seeger K."/>
            <person name="Saunders D."/>
            <person name="Sharp S."/>
            <person name="Squares R."/>
            <person name="Squares S."/>
            <person name="Taylor K."/>
            <person name="Warren T."/>
            <person name="Wietzorrek A."/>
            <person name="Woodward J.R."/>
            <person name="Barrell B.G."/>
            <person name="Parkhill J."/>
            <person name="Hopwood D.A."/>
        </authorList>
    </citation>
    <scope>NUCLEOTIDE SEQUENCE [LARGE SCALE GENOMIC DNA]</scope>
    <source>
        <strain>ATCC BAA-471 / A3(2) / M145</strain>
    </source>
</reference>
<gene>
    <name type="primary">recF</name>
    <name type="ordered locus">SCO3876</name>
    <name type="ORF">SCH18.13c</name>
</gene>
<keyword id="KW-0067">ATP-binding</keyword>
<keyword id="KW-0963">Cytoplasm</keyword>
<keyword id="KW-0227">DNA damage</keyword>
<keyword id="KW-0234">DNA repair</keyword>
<keyword id="KW-0235">DNA replication</keyword>
<keyword id="KW-0238">DNA-binding</keyword>
<keyword id="KW-0547">Nucleotide-binding</keyword>
<keyword id="KW-1185">Reference proteome</keyword>
<keyword id="KW-0742">SOS response</keyword>
<name>RECF_STRCO</name>